<dbReference type="EC" id="3.1.26.-" evidence="1"/>
<dbReference type="EMBL" id="AP008231">
    <property type="protein sequence ID" value="BAD80162.1"/>
    <property type="status" value="ALT_INIT"/>
    <property type="molecule type" value="Genomic_DNA"/>
</dbReference>
<dbReference type="RefSeq" id="WP_041677031.1">
    <property type="nucleotide sequence ID" value="NC_006576.1"/>
</dbReference>
<dbReference type="SMR" id="Q5N0K8"/>
<dbReference type="KEGG" id="syc:syc1972_d"/>
<dbReference type="eggNOG" id="COG1939">
    <property type="taxonomic scope" value="Bacteria"/>
</dbReference>
<dbReference type="Proteomes" id="UP000001175">
    <property type="component" value="Chromosome"/>
</dbReference>
<dbReference type="GO" id="GO:0005737">
    <property type="term" value="C:cytoplasm"/>
    <property type="evidence" value="ECO:0007669"/>
    <property type="project" value="UniProtKB-SubCell"/>
</dbReference>
<dbReference type="GO" id="GO:0004525">
    <property type="term" value="F:ribonuclease III activity"/>
    <property type="evidence" value="ECO:0007669"/>
    <property type="project" value="InterPro"/>
</dbReference>
<dbReference type="GO" id="GO:0019843">
    <property type="term" value="F:rRNA binding"/>
    <property type="evidence" value="ECO:0007669"/>
    <property type="project" value="UniProtKB-UniRule"/>
</dbReference>
<dbReference type="GO" id="GO:0006364">
    <property type="term" value="P:rRNA processing"/>
    <property type="evidence" value="ECO:0007669"/>
    <property type="project" value="UniProtKB-UniRule"/>
</dbReference>
<dbReference type="Gene3D" id="1.10.1520.10">
    <property type="entry name" value="Ribonuclease III domain"/>
    <property type="match status" value="1"/>
</dbReference>
<dbReference type="HAMAP" id="MF_01468">
    <property type="entry name" value="RNase_Mini_III"/>
    <property type="match status" value="1"/>
</dbReference>
<dbReference type="InterPro" id="IPR008226">
    <property type="entry name" value="Mini3_fam"/>
</dbReference>
<dbReference type="InterPro" id="IPR000999">
    <property type="entry name" value="RNase_III_dom"/>
</dbReference>
<dbReference type="InterPro" id="IPR036389">
    <property type="entry name" value="RNase_III_sf"/>
</dbReference>
<dbReference type="PANTHER" id="PTHR34276">
    <property type="entry name" value="MINI-RIBONUCLEASE 3"/>
    <property type="match status" value="1"/>
</dbReference>
<dbReference type="PANTHER" id="PTHR34276:SF1">
    <property type="entry name" value="MINI-RIBONUCLEASE 3"/>
    <property type="match status" value="1"/>
</dbReference>
<dbReference type="Pfam" id="PF00636">
    <property type="entry name" value="Ribonuclease_3"/>
    <property type="match status" value="1"/>
</dbReference>
<dbReference type="PIRSF" id="PIRSF005520">
    <property type="entry name" value="UCP005520"/>
    <property type="match status" value="1"/>
</dbReference>
<dbReference type="SMART" id="SM00535">
    <property type="entry name" value="RIBOc"/>
    <property type="match status" value="1"/>
</dbReference>
<dbReference type="SUPFAM" id="SSF69065">
    <property type="entry name" value="RNase III domain-like"/>
    <property type="match status" value="1"/>
</dbReference>
<accession>Q5N0K8</accession>
<feature type="chain" id="PRO_0000415994" description="Mini-ribonuclease 3">
    <location>
        <begin position="1"/>
        <end position="138"/>
    </location>
</feature>
<feature type="active site" evidence="1">
    <location>
        <position position="33"/>
    </location>
</feature>
<gene>
    <name evidence="1" type="primary">mrnC</name>
    <name type="ordered locus">syc1972_d</name>
</gene>
<comment type="function">
    <text evidence="1">Involved in correct processing of both the 5' and 3' ends of 23S rRNA precursor. Processes 30S rRNA precursor transcript even in absence of ribonuclease 3 (Rnc); Rnc processes 30S rRNA into smaller rRNA precursors.</text>
</comment>
<comment type="cofactor">
    <cofactor evidence="1">
        <name>Mg(2+)</name>
        <dbReference type="ChEBI" id="CHEBI:18420"/>
    </cofactor>
</comment>
<comment type="subunit">
    <text evidence="1">Homodimer.</text>
</comment>
<comment type="subcellular location">
    <subcellularLocation>
        <location evidence="1">Cytoplasm</location>
    </subcellularLocation>
</comment>
<comment type="similarity">
    <text evidence="1">Belongs to the MrnC RNase family.</text>
</comment>
<comment type="sequence caution" evidence="2">
    <conflict type="erroneous initiation">
        <sequence resource="EMBL-CDS" id="BAD80162"/>
    </conflict>
    <text>Truncated N-terminus.</text>
</comment>
<sequence>MFVPESDPLRGDRRLSPAAAKQLAPQALAYLGDALYEFHVRLRLLLPAQRSHQVHQSVVGAVRAERQAELLVSLLPLLTAEELEIVRRGRNAAGRVPRRLTGEYYQQATGLETLLGYLYLCDPQRLQALLQQLPVTEY</sequence>
<reference key="1">
    <citation type="journal article" date="2007" name="Photosyn. Res.">
        <title>Complete nucleotide sequence of the freshwater unicellular cyanobacterium Synechococcus elongatus PCC 6301 chromosome: gene content and organization.</title>
        <authorList>
            <person name="Sugita C."/>
            <person name="Ogata K."/>
            <person name="Shikata M."/>
            <person name="Jikuya H."/>
            <person name="Takano J."/>
            <person name="Furumichi M."/>
            <person name="Kanehisa M."/>
            <person name="Omata T."/>
            <person name="Sugiura M."/>
            <person name="Sugita M."/>
        </authorList>
    </citation>
    <scope>NUCLEOTIDE SEQUENCE [LARGE SCALE GENOMIC DNA]</scope>
    <source>
        <strain>ATCC 27144 / PCC 6301 / SAUG 1402/1</strain>
    </source>
</reference>
<proteinExistence type="inferred from homology"/>
<organism>
    <name type="scientific">Synechococcus sp. (strain ATCC 27144 / PCC 6301 / SAUG 1402/1)</name>
    <name type="common">Anacystis nidulans</name>
    <dbReference type="NCBI Taxonomy" id="269084"/>
    <lineage>
        <taxon>Bacteria</taxon>
        <taxon>Bacillati</taxon>
        <taxon>Cyanobacteriota</taxon>
        <taxon>Cyanophyceae</taxon>
        <taxon>Synechococcales</taxon>
        <taxon>Synechococcaceae</taxon>
        <taxon>Synechococcus</taxon>
    </lineage>
</organism>
<evidence type="ECO:0000255" key="1">
    <source>
        <dbReference type="HAMAP-Rule" id="MF_01468"/>
    </source>
</evidence>
<evidence type="ECO:0000305" key="2"/>
<name>MRNC_SYNP6</name>
<keyword id="KW-0963">Cytoplasm</keyword>
<keyword id="KW-0255">Endonuclease</keyword>
<keyword id="KW-0378">Hydrolase</keyword>
<keyword id="KW-0460">Magnesium</keyword>
<keyword id="KW-0540">Nuclease</keyword>
<keyword id="KW-0690">Ribosome biogenesis</keyword>
<keyword id="KW-0694">RNA-binding</keyword>
<keyword id="KW-0698">rRNA processing</keyword>
<keyword id="KW-0699">rRNA-binding</keyword>
<protein>
    <recommendedName>
        <fullName evidence="1">Mini-ribonuclease 3</fullName>
        <shortName evidence="1">Mini-3</shortName>
        <shortName evidence="1">Mini-RNase 3</shortName>
        <ecNumber evidence="1">3.1.26.-</ecNumber>
    </recommendedName>
    <alternativeName>
        <fullName evidence="1">Mini-RNase III</fullName>
        <shortName evidence="1">Mini-III</shortName>
    </alternativeName>
</protein>